<name>PETL_LIRTU</name>
<geneLocation type="chloroplast"/>
<keyword id="KW-0150">Chloroplast</keyword>
<keyword id="KW-0249">Electron transport</keyword>
<keyword id="KW-0472">Membrane</keyword>
<keyword id="KW-0602">Photosynthesis</keyword>
<keyword id="KW-0934">Plastid</keyword>
<keyword id="KW-0793">Thylakoid</keyword>
<keyword id="KW-0812">Transmembrane</keyword>
<keyword id="KW-1133">Transmembrane helix</keyword>
<keyword id="KW-0813">Transport</keyword>
<organism>
    <name type="scientific">Liriodendron tulipifera</name>
    <name type="common">Tuliptree</name>
    <name type="synonym">Tulip poplar</name>
    <dbReference type="NCBI Taxonomy" id="3415"/>
    <lineage>
        <taxon>Eukaryota</taxon>
        <taxon>Viridiplantae</taxon>
        <taxon>Streptophyta</taxon>
        <taxon>Embryophyta</taxon>
        <taxon>Tracheophyta</taxon>
        <taxon>Spermatophyta</taxon>
        <taxon>Magnoliopsida</taxon>
        <taxon>Magnoliidae</taxon>
        <taxon>Magnoliales</taxon>
        <taxon>Magnoliaceae</taxon>
        <taxon>Liriodendron</taxon>
    </lineage>
</organism>
<protein>
    <recommendedName>
        <fullName evidence="1">Cytochrome b6-f complex subunit 6</fullName>
    </recommendedName>
    <alternativeName>
        <fullName evidence="1">Cytochrome b6-f complex subunit PetL</fullName>
    </alternativeName>
    <alternativeName>
        <fullName evidence="1">Cytochrome b6-f complex subunit VI</fullName>
    </alternativeName>
</protein>
<accession>Q0G9K1</accession>
<comment type="function">
    <text evidence="1">Component of the cytochrome b6-f complex, which mediates electron transfer between photosystem II (PSII) and photosystem I (PSI), cyclic electron flow around PSI, and state transitions. PetL is important for photoautotrophic growth as well as for electron transfer efficiency and stability of the cytochrome b6-f complex.</text>
</comment>
<comment type="subunit">
    <text evidence="1">The 4 large subunits of the cytochrome b6-f complex are cytochrome b6, subunit IV (17 kDa polypeptide, PetD), cytochrome f and the Rieske protein, while the 4 small subunits are PetG, PetL, PetM and PetN. The complex functions as a dimer.</text>
</comment>
<comment type="subcellular location">
    <subcellularLocation>
        <location evidence="1">Plastid</location>
        <location evidence="1">Chloroplast thylakoid membrane</location>
        <topology evidence="1">Single-pass membrane protein</topology>
    </subcellularLocation>
</comment>
<comment type="similarity">
    <text evidence="1">Belongs to the PetL family.</text>
</comment>
<reference key="1">
    <citation type="journal article" date="2006" name="BMC Evol. Biol.">
        <title>Complete plastid genome sequences of Drimys, Liriodendron, and Piper: implications for the phylogenetic relationships of magnoliids.</title>
        <authorList>
            <person name="Cai Z."/>
            <person name="Penaflor C."/>
            <person name="Kuehl J.V."/>
            <person name="Leebens-Mack J."/>
            <person name="Carlson J.E."/>
            <person name="dePamphilis C.W."/>
            <person name="Boore J.L."/>
            <person name="Jansen R.K."/>
        </authorList>
    </citation>
    <scope>NUCLEOTIDE SEQUENCE [LARGE SCALE GENOMIC DNA]</scope>
</reference>
<gene>
    <name evidence="1" type="primary">petL</name>
</gene>
<feature type="chain" id="PRO_0000275528" description="Cytochrome b6-f complex subunit 6">
    <location>
        <begin position="1"/>
        <end position="31"/>
    </location>
</feature>
<feature type="transmembrane region" description="Helical" evidence="1">
    <location>
        <begin position="4"/>
        <end position="26"/>
    </location>
</feature>
<dbReference type="EMBL" id="DQ899947">
    <property type="protein sequence ID" value="ABI32527.1"/>
    <property type="molecule type" value="Genomic_DNA"/>
</dbReference>
<dbReference type="RefSeq" id="YP_740220.1">
    <property type="nucleotide sequence ID" value="NC_008326.1"/>
</dbReference>
<dbReference type="SMR" id="Q0G9K1"/>
<dbReference type="GeneID" id="4266642"/>
<dbReference type="GO" id="GO:0009535">
    <property type="term" value="C:chloroplast thylakoid membrane"/>
    <property type="evidence" value="ECO:0007669"/>
    <property type="project" value="UniProtKB-SubCell"/>
</dbReference>
<dbReference type="GO" id="GO:0009512">
    <property type="term" value="C:cytochrome b6f complex"/>
    <property type="evidence" value="ECO:0007669"/>
    <property type="project" value="InterPro"/>
</dbReference>
<dbReference type="GO" id="GO:0045158">
    <property type="term" value="F:electron transporter, transferring electrons within cytochrome b6/f complex of photosystem II activity"/>
    <property type="evidence" value="ECO:0007669"/>
    <property type="project" value="UniProtKB-UniRule"/>
</dbReference>
<dbReference type="GO" id="GO:0015979">
    <property type="term" value="P:photosynthesis"/>
    <property type="evidence" value="ECO:0007669"/>
    <property type="project" value="UniProtKB-KW"/>
</dbReference>
<dbReference type="HAMAP" id="MF_00433">
    <property type="entry name" value="Cytb6_f_PetL"/>
    <property type="match status" value="1"/>
</dbReference>
<dbReference type="InterPro" id="IPR007802">
    <property type="entry name" value="Cyt_b6/f_cplx_su6"/>
</dbReference>
<dbReference type="PANTHER" id="PTHR37266">
    <property type="entry name" value="CYTOCHROME B6-F COMPLEX SUBUNIT 6"/>
    <property type="match status" value="1"/>
</dbReference>
<dbReference type="PANTHER" id="PTHR37266:SF1">
    <property type="entry name" value="CYTOCHROME B6-F COMPLEX SUBUNIT 6"/>
    <property type="match status" value="1"/>
</dbReference>
<dbReference type="Pfam" id="PF05115">
    <property type="entry name" value="PetL"/>
    <property type="match status" value="1"/>
</dbReference>
<evidence type="ECO:0000255" key="1">
    <source>
        <dbReference type="HAMAP-Rule" id="MF_00433"/>
    </source>
</evidence>
<proteinExistence type="inferred from homology"/>
<sequence>MSTITSYFGFLLAASTITPALLIGLSKIRLI</sequence>